<sequence length="135" mass="14838">AVCVSLLGAANIPPQPLNLYQFKNMIQCAGTQLWVAYVNYGCYCGKGGSGTPVDQLDRCCQTHDHCYHNAKRFGKCNPYFKTYEYTCNKPNLTCRGAKGSCGRNVCDCDRAAAICFAAAPYNLSNFGINKKTHCK</sequence>
<comment type="function">
    <text evidence="1">Snake venom phospholipase A2 (PLA2) that inhibits neuromuscular transmission by blocking acetylcholine release from the nerve termini. PLA2 catalyzes the calcium-dependent hydrolysis of the 2-acyl groups in 3-sn-phosphoglycerides (By similarity).</text>
</comment>
<comment type="catalytic activity">
    <reaction evidence="2 3">
        <text>a 1,2-diacyl-sn-glycero-3-phosphocholine + H2O = a 1-acyl-sn-glycero-3-phosphocholine + a fatty acid + H(+)</text>
        <dbReference type="Rhea" id="RHEA:15801"/>
        <dbReference type="ChEBI" id="CHEBI:15377"/>
        <dbReference type="ChEBI" id="CHEBI:15378"/>
        <dbReference type="ChEBI" id="CHEBI:28868"/>
        <dbReference type="ChEBI" id="CHEBI:57643"/>
        <dbReference type="ChEBI" id="CHEBI:58168"/>
        <dbReference type="EC" id="3.1.1.4"/>
    </reaction>
</comment>
<comment type="cofactor">
    <cofactor evidence="1">
        <name>Ca(2+)</name>
        <dbReference type="ChEBI" id="CHEBI:29108"/>
    </cofactor>
    <text evidence="1">Binds 1 Ca(2+) ion.</text>
</comment>
<comment type="subcellular location">
    <subcellularLocation>
        <location>Secreted</location>
    </subcellularLocation>
</comment>
<comment type="tissue specificity">
    <text>Expressed by the venom gland.</text>
</comment>
<comment type="similarity">
    <text evidence="4">Belongs to the phospholipase A2 family. Group I subfamily. D49 sub-subfamily.</text>
</comment>
<comment type="caution">
    <text evidence="5">This protein is not found in the crude venom.</text>
</comment>
<feature type="signal peptide" evidence="1">
    <location>
        <begin position="1" status="less than"/>
        <end status="unknown"/>
    </location>
</feature>
<feature type="propeptide" id="PRO_0000291947" evidence="1">
    <location>
        <begin status="unknown"/>
        <end position="17"/>
    </location>
</feature>
<feature type="chain" id="PRO_0000161634" description="Basic phospholipase A2 10">
    <location>
        <begin position="18"/>
        <end position="135"/>
    </location>
</feature>
<feature type="active site" evidence="1">
    <location>
        <position position="63"/>
    </location>
</feature>
<feature type="active site" evidence="1">
    <location>
        <position position="109"/>
    </location>
</feature>
<feature type="binding site" evidence="1">
    <location>
        <position position="43"/>
    </location>
    <ligand>
        <name>Ca(2+)</name>
        <dbReference type="ChEBI" id="CHEBI:29108"/>
    </ligand>
</feature>
<feature type="binding site" evidence="1">
    <location>
        <position position="45"/>
    </location>
    <ligand>
        <name>Ca(2+)</name>
        <dbReference type="ChEBI" id="CHEBI:29108"/>
    </ligand>
</feature>
<feature type="binding site" evidence="1">
    <location>
        <position position="47"/>
    </location>
    <ligand>
        <name>Ca(2+)</name>
        <dbReference type="ChEBI" id="CHEBI:29108"/>
    </ligand>
</feature>
<feature type="binding site" evidence="1">
    <location>
        <position position="64"/>
    </location>
    <ligand>
        <name>Ca(2+)</name>
        <dbReference type="ChEBI" id="CHEBI:29108"/>
    </ligand>
</feature>
<feature type="disulfide bond" evidence="1">
    <location>
        <begin position="28"/>
        <end position="87"/>
    </location>
</feature>
<feature type="disulfide bond" evidence="1">
    <location>
        <begin position="42"/>
        <end position="134"/>
    </location>
</feature>
<feature type="disulfide bond" evidence="1">
    <location>
        <begin position="44"/>
        <end position="60"/>
    </location>
</feature>
<feature type="disulfide bond" evidence="1">
    <location>
        <begin position="59"/>
        <end position="115"/>
    </location>
</feature>
<feature type="disulfide bond" evidence="1">
    <location>
        <begin position="66"/>
        <end position="108"/>
    </location>
</feature>
<feature type="disulfide bond" evidence="1">
    <location>
        <begin position="76"/>
        <end position="101"/>
    </location>
</feature>
<feature type="disulfide bond" evidence="1">
    <location>
        <begin position="94"/>
        <end position="106"/>
    </location>
</feature>
<feature type="sequence variant">
    <original>Q</original>
    <variation>R</variation>
    <location>
        <position position="32"/>
    </location>
</feature>
<feature type="sequence variant">
    <original>H</original>
    <variation>D</variation>
    <location>
        <position position="68"/>
    </location>
</feature>
<feature type="sequence variant">
    <original>E</original>
    <variation>S</variation>
    <location>
        <position position="84"/>
    </location>
</feature>
<feature type="sequence variant">
    <original>G</original>
    <variation>D</variation>
    <location>
        <position position="96"/>
    </location>
</feature>
<feature type="sequence variant">
    <original>SCGRN</original>
    <variation>TCERF</variation>
    <location>
        <begin position="100"/>
        <end position="104"/>
    </location>
</feature>
<feature type="non-terminal residue">
    <location>
        <position position="1"/>
    </location>
</feature>
<evidence type="ECO:0000250" key="1"/>
<evidence type="ECO:0000255" key="2">
    <source>
        <dbReference type="PROSITE-ProRule" id="PRU10035"/>
    </source>
</evidence>
<evidence type="ECO:0000255" key="3">
    <source>
        <dbReference type="PROSITE-ProRule" id="PRU10036"/>
    </source>
</evidence>
<evidence type="ECO:0000305" key="4"/>
<evidence type="ECO:0000305" key="5">
    <source>
    </source>
</evidence>
<name>PA2BA_BUNFA</name>
<proteinExistence type="evidence at protein level"/>
<organism>
    <name type="scientific">Bungarus fasciatus</name>
    <name type="common">Banded krait</name>
    <name type="synonym">Pseudoboa fasciata</name>
    <dbReference type="NCBI Taxonomy" id="8613"/>
    <lineage>
        <taxon>Eukaryota</taxon>
        <taxon>Metazoa</taxon>
        <taxon>Chordata</taxon>
        <taxon>Craniata</taxon>
        <taxon>Vertebrata</taxon>
        <taxon>Euteleostomi</taxon>
        <taxon>Lepidosauria</taxon>
        <taxon>Squamata</taxon>
        <taxon>Bifurcata</taxon>
        <taxon>Unidentata</taxon>
        <taxon>Episquamata</taxon>
        <taxon>Toxicofera</taxon>
        <taxon>Serpentes</taxon>
        <taxon>Colubroidea</taxon>
        <taxon>Elapidae</taxon>
        <taxon>Bungarinae</taxon>
        <taxon>Bungarus</taxon>
    </lineage>
</organism>
<reference key="1">
    <citation type="journal article" date="2007" name="FEBS J.">
        <title>Sequences, geographic variations and molecular phylogeny of venom phospholipases and three-finger toxins of eastern India Bungarus fasciatus and kinetic analyses of its Pro31 phospholipases A2.</title>
        <authorList>
            <person name="Tsai I.-H."/>
            <person name="Tsai H.-Y."/>
            <person name="Saha A."/>
            <person name="Gomes A."/>
        </authorList>
    </citation>
    <scope>NUCLEOTIDE SEQUENCE [MRNA]</scope>
    <source>
        <tissue>Venom gland</tissue>
    </source>
</reference>
<reference key="2">
    <citation type="journal article" date="1988" name="Biol. Chem. Hoppe-Seyler">
        <title>The complete amino-acid sequence of a basic phospholipase A2 in the venom of Bungarus fasciatus.</title>
        <authorList>
            <person name="Liu C.-S."/>
            <person name="Chang C.-S."/>
            <person name="Leu H.-L."/>
            <person name="Chen S.-W."/>
            <person name="Lo T.-B."/>
        </authorList>
    </citation>
    <scope>PROTEIN SEQUENCE OF 18-135</scope>
    <source>
        <tissue>Venom</tissue>
    </source>
</reference>
<dbReference type="EC" id="3.1.1.4"/>
<dbReference type="EMBL" id="DQ508414">
    <property type="status" value="NOT_ANNOTATED_CDS"/>
    <property type="molecule type" value="mRNA"/>
</dbReference>
<dbReference type="PIR" id="S01801">
    <property type="entry name" value="S01801"/>
</dbReference>
<dbReference type="SMR" id="P14411"/>
<dbReference type="GO" id="GO:0005576">
    <property type="term" value="C:extracellular region"/>
    <property type="evidence" value="ECO:0007669"/>
    <property type="project" value="UniProtKB-SubCell"/>
</dbReference>
<dbReference type="GO" id="GO:0005509">
    <property type="term" value="F:calcium ion binding"/>
    <property type="evidence" value="ECO:0007669"/>
    <property type="project" value="InterPro"/>
</dbReference>
<dbReference type="GO" id="GO:0047498">
    <property type="term" value="F:calcium-dependent phospholipase A2 activity"/>
    <property type="evidence" value="ECO:0007669"/>
    <property type="project" value="TreeGrafter"/>
</dbReference>
<dbReference type="GO" id="GO:0005543">
    <property type="term" value="F:phospholipid binding"/>
    <property type="evidence" value="ECO:0007669"/>
    <property type="project" value="TreeGrafter"/>
</dbReference>
<dbReference type="GO" id="GO:0090729">
    <property type="term" value="F:toxin activity"/>
    <property type="evidence" value="ECO:0007669"/>
    <property type="project" value="UniProtKB-KW"/>
</dbReference>
<dbReference type="GO" id="GO:0050482">
    <property type="term" value="P:arachidonate secretion"/>
    <property type="evidence" value="ECO:0007669"/>
    <property type="project" value="InterPro"/>
</dbReference>
<dbReference type="GO" id="GO:0016042">
    <property type="term" value="P:lipid catabolic process"/>
    <property type="evidence" value="ECO:0007669"/>
    <property type="project" value="UniProtKB-KW"/>
</dbReference>
<dbReference type="GO" id="GO:0006644">
    <property type="term" value="P:phospholipid metabolic process"/>
    <property type="evidence" value="ECO:0007669"/>
    <property type="project" value="InterPro"/>
</dbReference>
<dbReference type="CDD" id="cd00125">
    <property type="entry name" value="PLA2c"/>
    <property type="match status" value="1"/>
</dbReference>
<dbReference type="FunFam" id="1.20.90.10:FF:000007">
    <property type="entry name" value="Acidic phospholipase A2"/>
    <property type="match status" value="1"/>
</dbReference>
<dbReference type="Gene3D" id="1.20.90.10">
    <property type="entry name" value="Phospholipase A2 domain"/>
    <property type="match status" value="1"/>
</dbReference>
<dbReference type="InterPro" id="IPR001211">
    <property type="entry name" value="PLipase_A2"/>
</dbReference>
<dbReference type="InterPro" id="IPR033112">
    <property type="entry name" value="PLipase_A2_Asp_AS"/>
</dbReference>
<dbReference type="InterPro" id="IPR016090">
    <property type="entry name" value="PLipase_A2_dom"/>
</dbReference>
<dbReference type="InterPro" id="IPR036444">
    <property type="entry name" value="PLipase_A2_dom_sf"/>
</dbReference>
<dbReference type="InterPro" id="IPR033113">
    <property type="entry name" value="PLipase_A2_His_AS"/>
</dbReference>
<dbReference type="PANTHER" id="PTHR11716:SF94">
    <property type="entry name" value="PHOSPHOLIPASE A2"/>
    <property type="match status" value="1"/>
</dbReference>
<dbReference type="PANTHER" id="PTHR11716">
    <property type="entry name" value="PHOSPHOLIPASE A2 FAMILY MEMBER"/>
    <property type="match status" value="1"/>
</dbReference>
<dbReference type="Pfam" id="PF00068">
    <property type="entry name" value="Phospholip_A2_1"/>
    <property type="match status" value="1"/>
</dbReference>
<dbReference type="PRINTS" id="PR00389">
    <property type="entry name" value="PHPHLIPASEA2"/>
</dbReference>
<dbReference type="SMART" id="SM00085">
    <property type="entry name" value="PA2c"/>
    <property type="match status" value="1"/>
</dbReference>
<dbReference type="SUPFAM" id="SSF48619">
    <property type="entry name" value="Phospholipase A2, PLA2"/>
    <property type="match status" value="1"/>
</dbReference>
<dbReference type="PROSITE" id="PS00119">
    <property type="entry name" value="PA2_ASP"/>
    <property type="match status" value="1"/>
</dbReference>
<dbReference type="PROSITE" id="PS00118">
    <property type="entry name" value="PA2_HIS"/>
    <property type="match status" value="1"/>
</dbReference>
<accession>P14411</accession>
<keyword id="KW-0106">Calcium</keyword>
<keyword id="KW-0903">Direct protein sequencing</keyword>
<keyword id="KW-1015">Disulfide bond</keyword>
<keyword id="KW-0378">Hydrolase</keyword>
<keyword id="KW-0442">Lipid degradation</keyword>
<keyword id="KW-0443">Lipid metabolism</keyword>
<keyword id="KW-0479">Metal-binding</keyword>
<keyword id="KW-0528">Neurotoxin</keyword>
<keyword id="KW-0638">Presynaptic neurotoxin</keyword>
<keyword id="KW-0964">Secreted</keyword>
<keyword id="KW-0732">Signal</keyword>
<keyword id="KW-0800">Toxin</keyword>
<protein>
    <recommendedName>
        <fullName>Basic phospholipase A2 10</fullName>
        <shortName>svPLA2</shortName>
        <ecNumber>3.1.1.4</ecNumber>
    </recommendedName>
    <alternativeName>
        <fullName>KBf X</fullName>
    </alternativeName>
    <alternativeName>
        <fullName>KBf-10</fullName>
    </alternativeName>
    <alternativeName>
        <fullName>Phosphatidylcholine 2-acylhydrolase</fullName>
    </alternativeName>
</protein>